<feature type="chain" id="PRO_1000132203" description="Probable transcriptional regulatory protein Haur_3030">
    <location>
        <begin position="1"/>
        <end position="252"/>
    </location>
</feature>
<organism>
    <name type="scientific">Herpetosiphon aurantiacus (strain ATCC 23779 / DSM 785 / 114-95)</name>
    <dbReference type="NCBI Taxonomy" id="316274"/>
    <lineage>
        <taxon>Bacteria</taxon>
        <taxon>Bacillati</taxon>
        <taxon>Chloroflexota</taxon>
        <taxon>Chloroflexia</taxon>
        <taxon>Herpetosiphonales</taxon>
        <taxon>Herpetosiphonaceae</taxon>
        <taxon>Herpetosiphon</taxon>
    </lineage>
</organism>
<keyword id="KW-0963">Cytoplasm</keyword>
<keyword id="KW-0238">DNA-binding</keyword>
<keyword id="KW-0804">Transcription</keyword>
<keyword id="KW-0805">Transcription regulation</keyword>
<accession>A9B4U5</accession>
<evidence type="ECO:0000255" key="1">
    <source>
        <dbReference type="HAMAP-Rule" id="MF_00693"/>
    </source>
</evidence>
<name>Y3030_HERA2</name>
<dbReference type="EMBL" id="CP000875">
    <property type="protein sequence ID" value="ABX05668.1"/>
    <property type="molecule type" value="Genomic_DNA"/>
</dbReference>
<dbReference type="SMR" id="A9B4U5"/>
<dbReference type="FunCoup" id="A9B4U5">
    <property type="interactions" value="454"/>
</dbReference>
<dbReference type="STRING" id="316274.Haur_3030"/>
<dbReference type="KEGG" id="hau:Haur_3030"/>
<dbReference type="eggNOG" id="COG0217">
    <property type="taxonomic scope" value="Bacteria"/>
</dbReference>
<dbReference type="HOGENOM" id="CLU_062974_2_2_0"/>
<dbReference type="InParanoid" id="A9B4U5"/>
<dbReference type="BioCyc" id="HAUR316274:GHYA-3062-MONOMER"/>
<dbReference type="Proteomes" id="UP000000787">
    <property type="component" value="Chromosome"/>
</dbReference>
<dbReference type="GO" id="GO:0005829">
    <property type="term" value="C:cytosol"/>
    <property type="evidence" value="ECO:0007669"/>
    <property type="project" value="TreeGrafter"/>
</dbReference>
<dbReference type="GO" id="GO:0003677">
    <property type="term" value="F:DNA binding"/>
    <property type="evidence" value="ECO:0007669"/>
    <property type="project" value="UniProtKB-UniRule"/>
</dbReference>
<dbReference type="GO" id="GO:0006355">
    <property type="term" value="P:regulation of DNA-templated transcription"/>
    <property type="evidence" value="ECO:0007669"/>
    <property type="project" value="UniProtKB-UniRule"/>
</dbReference>
<dbReference type="FunFam" id="1.10.10.200:FF:000002">
    <property type="entry name" value="Probable transcriptional regulatory protein CLM62_37755"/>
    <property type="match status" value="1"/>
</dbReference>
<dbReference type="Gene3D" id="1.10.10.200">
    <property type="match status" value="1"/>
</dbReference>
<dbReference type="Gene3D" id="3.30.70.980">
    <property type="match status" value="2"/>
</dbReference>
<dbReference type="HAMAP" id="MF_00693">
    <property type="entry name" value="Transcrip_reg_TACO1"/>
    <property type="match status" value="1"/>
</dbReference>
<dbReference type="InterPro" id="IPR017856">
    <property type="entry name" value="Integrase-like_N"/>
</dbReference>
<dbReference type="InterPro" id="IPR048300">
    <property type="entry name" value="TACO1_YebC-like_2nd/3rd_dom"/>
</dbReference>
<dbReference type="InterPro" id="IPR049083">
    <property type="entry name" value="TACO1_YebC_N"/>
</dbReference>
<dbReference type="InterPro" id="IPR002876">
    <property type="entry name" value="Transcrip_reg_TACO1-like"/>
</dbReference>
<dbReference type="InterPro" id="IPR026564">
    <property type="entry name" value="Transcrip_reg_TACO1-like_dom3"/>
</dbReference>
<dbReference type="InterPro" id="IPR029072">
    <property type="entry name" value="YebC-like"/>
</dbReference>
<dbReference type="NCBIfam" id="NF001030">
    <property type="entry name" value="PRK00110.1"/>
    <property type="match status" value="1"/>
</dbReference>
<dbReference type="NCBIfam" id="NF009044">
    <property type="entry name" value="PRK12378.1"/>
    <property type="match status" value="1"/>
</dbReference>
<dbReference type="NCBIfam" id="TIGR01033">
    <property type="entry name" value="YebC/PmpR family DNA-binding transcriptional regulator"/>
    <property type="match status" value="1"/>
</dbReference>
<dbReference type="PANTHER" id="PTHR12532:SF6">
    <property type="entry name" value="TRANSCRIPTIONAL REGULATORY PROTEIN YEBC-RELATED"/>
    <property type="match status" value="1"/>
</dbReference>
<dbReference type="PANTHER" id="PTHR12532">
    <property type="entry name" value="TRANSLATIONAL ACTIVATOR OF CYTOCHROME C OXIDASE 1"/>
    <property type="match status" value="1"/>
</dbReference>
<dbReference type="Pfam" id="PF20772">
    <property type="entry name" value="TACO1_YebC_N"/>
    <property type="match status" value="1"/>
</dbReference>
<dbReference type="Pfam" id="PF01709">
    <property type="entry name" value="Transcrip_reg"/>
    <property type="match status" value="1"/>
</dbReference>
<dbReference type="SUPFAM" id="SSF75625">
    <property type="entry name" value="YebC-like"/>
    <property type="match status" value="1"/>
</dbReference>
<sequence>MSGHTKWHEIRRKKGVLDQRRGQRWTKIARDITIAAREGGGSPDMNFRLRLAIEKAKADNMPADNIQRAIDRGTGVSGEAALEEVTYEGYGPGGIAVIVDAATDNRNRTVSEIRTAFNKNGGTLGEGGSVGWMFDIKGLISIDRTEKTDPDEVTLLAIDADADDVIVNDDAIIVYTEFSKLAAVRDALNEQGLKISTAEKTMLAKTIMEADEATTFQILRLMERLEDLDDVQKVYSNLEVSDELAEKYAEQG</sequence>
<protein>
    <recommendedName>
        <fullName evidence="1">Probable transcriptional regulatory protein Haur_3030</fullName>
    </recommendedName>
</protein>
<gene>
    <name type="ordered locus">Haur_3030</name>
</gene>
<reference key="1">
    <citation type="journal article" date="2011" name="Stand. Genomic Sci.">
        <title>Complete genome sequence of the filamentous gliding predatory bacterium Herpetosiphon aurantiacus type strain (114-95(T)).</title>
        <authorList>
            <person name="Kiss H."/>
            <person name="Nett M."/>
            <person name="Domin N."/>
            <person name="Martin K."/>
            <person name="Maresca J.A."/>
            <person name="Copeland A."/>
            <person name="Lapidus A."/>
            <person name="Lucas S."/>
            <person name="Berry K.W."/>
            <person name="Glavina Del Rio T."/>
            <person name="Dalin E."/>
            <person name="Tice H."/>
            <person name="Pitluck S."/>
            <person name="Richardson P."/>
            <person name="Bruce D."/>
            <person name="Goodwin L."/>
            <person name="Han C."/>
            <person name="Detter J.C."/>
            <person name="Schmutz J."/>
            <person name="Brettin T."/>
            <person name="Land M."/>
            <person name="Hauser L."/>
            <person name="Kyrpides N.C."/>
            <person name="Ivanova N."/>
            <person name="Goeker M."/>
            <person name="Woyke T."/>
            <person name="Klenk H.P."/>
            <person name="Bryant D.A."/>
        </authorList>
    </citation>
    <scope>NUCLEOTIDE SEQUENCE [LARGE SCALE GENOMIC DNA]</scope>
    <source>
        <strain>ATCC 23779 / DSM 785 / 114-95</strain>
    </source>
</reference>
<proteinExistence type="inferred from homology"/>
<comment type="subcellular location">
    <subcellularLocation>
        <location evidence="1">Cytoplasm</location>
    </subcellularLocation>
</comment>
<comment type="similarity">
    <text evidence="1">Belongs to the TACO1 family.</text>
</comment>